<comment type="function">
    <text evidence="1 2">Catalyzes the oxidation of trimethylamine (TMA) to produce trimethylamine N-oxide (TMAO) (PubMed:22006322, PubMed:34630359). In vitro, has a broad substrate specificity, oxidizing many nitrogen- and sulfur-containing compounds, including dimethylamine (DMA), dimethylsulfide (DMS), dimethylsulfoxide (DMSO) and methimazole (PubMed:22006322, PubMed:34630359). TMA shows the highest affinity (PubMed:34630359).</text>
</comment>
<comment type="catalytic activity">
    <reaction evidence="1 2">
        <text>trimethylamine + NADPH + O2 = trimethylamine N-oxide + NADP(+) + H2O</text>
        <dbReference type="Rhea" id="RHEA:31979"/>
        <dbReference type="ChEBI" id="CHEBI:15377"/>
        <dbReference type="ChEBI" id="CHEBI:15379"/>
        <dbReference type="ChEBI" id="CHEBI:15724"/>
        <dbReference type="ChEBI" id="CHEBI:57783"/>
        <dbReference type="ChEBI" id="CHEBI:58349"/>
        <dbReference type="ChEBI" id="CHEBI:58389"/>
        <dbReference type="EC" id="1.14.13.148"/>
    </reaction>
</comment>
<comment type="cofactor">
    <cofactor evidence="2">
        <name>FAD</name>
        <dbReference type="ChEBI" id="CHEBI:57692"/>
    </cofactor>
</comment>
<comment type="biophysicochemical properties">
    <kinetics>
        <KM evidence="1">28.5 uM for TMA</KM>
        <KM evidence="2">139 uM for TMA</KM>
        <KM evidence="1">306.1 uM for DMA</KM>
        <KM evidence="2">181.4 uM for DMA</KM>
        <KM evidence="1">26.4 uM for DMS</KM>
        <KM evidence="2">250.5 uM for DMS</KM>
        <KM evidence="1">7456 uM for DMSO</KM>
        <KM evidence="2">116.2 uM for methimazole</KM>
        <KM evidence="2">12.8 uM for NADPH</KM>
        <Vmax evidence="1">67.3 nmol/min/mg enzyme with TMA as substrate</Vmax>
        <Vmax evidence="1">41.4 nmol/min/mg enzyme with DMA as substrate</Vmax>
        <Vmax evidence="1">97.2 nmol/min/mg enzyme with DMS as substrate</Vmax>
        <Vmax evidence="1">41.3 nmol/min/mg enzyme with DMSO as substrate</Vmax>
        <text evidence="2">kcat is 22.4 min(-1) with TMA as substrate. kcat is 17.9 min(-1) with DMA as substrate. kcat is 4.5 min(-1) with DMS as substrate. kcat is 5.2 min(-1) with methimazole as substrate.</text>
    </kinetics>
    <phDependence>
        <text evidence="2">Optimum pH is 7.0 with DMS as substrate.</text>
    </phDependence>
    <temperatureDependence>
        <text evidence="2">Optimum temperature is 25 degrees Celsius with DMS as substrate.</text>
    </temperatureDependence>
</comment>
<comment type="subunit">
    <text evidence="2">Homodimer.</text>
</comment>
<comment type="miscellaneous">
    <text evidence="2">The catalytic process consists of a reductive half-reaction and an oxidative half-reaction, via the formation of a C4a-hydroperoxyflavin intermediate (PubMed:34630359). NADP(+) undergoes a conformational change in the oxidative half-reaction (PubMed:34630359).</text>
</comment>
<comment type="similarity">
    <text evidence="4">Belongs to the FMO family.</text>
</comment>
<proteinExistence type="evidence at protein level"/>
<reference key="1">
    <citation type="submission" date="2008-01" db="EMBL/GenBank/DDBJ databases">
        <authorList>
            <person name="Giovannoni S.J."/>
            <person name="Ferriera S."/>
            <person name="Johnson J."/>
            <person name="Kravitz S."/>
            <person name="Beeson K."/>
            <person name="Sutton G."/>
            <person name="Rogers Y.-H."/>
            <person name="Friedman R."/>
            <person name="Frazier M."/>
            <person name="Venter J.C."/>
        </authorList>
    </citation>
    <scope>NUCLEOTIDE SEQUENCE [LARGE SCALE GENOMIC DNA]</scope>
    <source>
        <strain>HTCC7211</strain>
    </source>
</reference>
<reference key="2">
    <citation type="journal article" date="2011" name="Proc. Natl. Acad. Sci. U.S.A.">
        <title>Bacterial flavin-containing monooxygenase is trimethylamine monooxygenase.</title>
        <authorList>
            <person name="Chen Y."/>
            <person name="Patel N.A."/>
            <person name="Crombie A."/>
            <person name="Scrivens J.H."/>
            <person name="Murrell J.C."/>
        </authorList>
    </citation>
    <scope>FUNCTION</scope>
    <scope>CATALYTIC ACTIVITY</scope>
    <scope>BIOPHYSICOCHEMICAL PROPERTIES</scope>
    <source>
        <strain>HTCC7211</strain>
    </source>
</reference>
<reference evidence="6 7 8" key="3">
    <citation type="journal article" date="2021" name="Front. Microbiol.">
        <title>Structural and mechanistic insights into dimethylsulfoxide formation through dimethylsulfide oxidation.</title>
        <authorList>
            <person name="Wang X.J."/>
            <person name="Zhang N."/>
            <person name="Teng Z.J."/>
            <person name="Wang P."/>
            <person name="Zhang W.P."/>
            <person name="Chen X.L."/>
            <person name="Zhang Y.Z."/>
            <person name="Chen Y."/>
            <person name="Fu H.H."/>
            <person name="Li C.Y."/>
        </authorList>
    </citation>
    <scope>X-RAY CRYSTALLOGRAPHY (1.79 ANGSTROMS) IN COMPLEX WITH FAD AND NADP(+)</scope>
    <scope>FUNCTION</scope>
    <scope>CATALYTIC ACTIVITY</scope>
    <scope>REACTION MECHANISM</scope>
    <scope>COFACTOR</scope>
    <scope>BIOPHYSICOCHEMICAL PROPERTIES</scope>
    <scope>SUBUNIT</scope>
    <scope>MUTAGENESIS OF GLU-37; TRP-46; TRP-70; ASN-72; TYR-170; SER-203; ARG-226; HIS-227; ASN-288; ASP-314; GLN-315; THR-318 AND ARG-409</scope>
    <source>
        <strain>HTCC7211</strain>
    </source>
</reference>
<keyword id="KW-0002">3D-structure</keyword>
<keyword id="KW-0274">FAD</keyword>
<keyword id="KW-0285">Flavoprotein</keyword>
<keyword id="KW-0503">Monooxygenase</keyword>
<keyword id="KW-0521">NADP</keyword>
<keyword id="KW-0560">Oxidoreductase</keyword>
<keyword id="KW-1185">Reference proteome</keyword>
<gene>
    <name evidence="3" type="primary">tmm</name>
    <name evidence="5" type="ORF">PB7211_242</name>
</gene>
<organism>
    <name type="scientific">Pelagibacter sp. (strain HTCC7211)</name>
    <dbReference type="NCBI Taxonomy" id="439493"/>
    <lineage>
        <taxon>Bacteria</taxon>
        <taxon>Pseudomonadati</taxon>
        <taxon>Pseudomonadota</taxon>
        <taxon>Alphaproteobacteria</taxon>
        <taxon>Candidatus Pelagibacterales</taxon>
        <taxon>Candidatus Pelagibacteraceae</taxon>
        <taxon>Candidatus Pelagibacter</taxon>
    </lineage>
</organism>
<name>TMM_PELS7</name>
<feature type="chain" id="PRO_0000458077" description="Trimethylamine monooxygenase">
    <location>
        <begin position="1"/>
        <end position="444"/>
    </location>
</feature>
<feature type="binding site" evidence="2 6 7 8">
    <location>
        <position position="12"/>
    </location>
    <ligand>
        <name>FAD</name>
        <dbReference type="ChEBI" id="CHEBI:57692"/>
    </ligand>
</feature>
<feature type="binding site" evidence="2 6 7 8">
    <location>
        <position position="37"/>
    </location>
    <ligand>
        <name>FAD</name>
        <dbReference type="ChEBI" id="CHEBI:57692"/>
    </ligand>
</feature>
<feature type="binding site" evidence="2 6 7 8">
    <location>
        <position position="39"/>
    </location>
    <ligand>
        <name>FAD</name>
        <dbReference type="ChEBI" id="CHEBI:57692"/>
    </ligand>
</feature>
<feature type="binding site" evidence="2 6 7 8">
    <location>
        <position position="45"/>
    </location>
    <ligand>
        <name>FAD</name>
        <dbReference type="ChEBI" id="CHEBI:57692"/>
    </ligand>
</feature>
<feature type="binding site" evidence="2 6 7 8">
    <location>
        <position position="46"/>
    </location>
    <ligand>
        <name>FAD</name>
        <dbReference type="ChEBI" id="CHEBI:57692"/>
    </ligand>
</feature>
<feature type="binding site" evidence="2 6 7 8">
    <location>
        <position position="70"/>
    </location>
    <ligand>
        <name>NADP(+)</name>
        <dbReference type="ChEBI" id="CHEBI:58349"/>
    </ligand>
</feature>
<feature type="binding site" evidence="2 6 7 8">
    <location>
        <position position="72"/>
    </location>
    <ligand>
        <name>FAD</name>
        <dbReference type="ChEBI" id="CHEBI:57692"/>
    </ligand>
</feature>
<feature type="binding site" evidence="2 6 7 8">
    <location>
        <position position="72"/>
    </location>
    <ligand>
        <name>NADP(+)</name>
        <dbReference type="ChEBI" id="CHEBI:58349"/>
    </ligand>
</feature>
<feature type="binding site" evidence="2 6 7 8">
    <location>
        <position position="125"/>
    </location>
    <ligand>
        <name>FAD</name>
        <dbReference type="ChEBI" id="CHEBI:57692"/>
    </ligand>
</feature>
<feature type="binding site" evidence="2 6 7 8">
    <location>
        <position position="170"/>
    </location>
    <ligand>
        <name>NADP(+)</name>
        <dbReference type="ChEBI" id="CHEBI:58349"/>
    </ligand>
</feature>
<feature type="binding site" evidence="2 6 7 8">
    <location>
        <position position="202"/>
    </location>
    <ligand>
        <name>NADP(+)</name>
        <dbReference type="ChEBI" id="CHEBI:58349"/>
    </ligand>
</feature>
<feature type="binding site" evidence="2 6 7 8">
    <location>
        <position position="203"/>
    </location>
    <ligand>
        <name>NADP(+)</name>
        <dbReference type="ChEBI" id="CHEBI:58349"/>
    </ligand>
</feature>
<feature type="binding site" evidence="2 6 7 8">
    <location>
        <position position="205"/>
    </location>
    <ligand>
        <name>NADP(+)</name>
        <dbReference type="ChEBI" id="CHEBI:58349"/>
    </ligand>
</feature>
<feature type="binding site" evidence="2 6 7 8">
    <location>
        <position position="226"/>
    </location>
    <ligand>
        <name>NADP(+)</name>
        <dbReference type="ChEBI" id="CHEBI:58349"/>
    </ligand>
</feature>
<feature type="binding site" evidence="2 6 7 8">
    <location>
        <position position="227"/>
    </location>
    <ligand>
        <name>NADP(+)</name>
        <dbReference type="ChEBI" id="CHEBI:58349"/>
    </ligand>
</feature>
<feature type="binding site" evidence="2 6 7 8">
    <location>
        <position position="288"/>
    </location>
    <ligand>
        <name>NADP(+)</name>
        <dbReference type="ChEBI" id="CHEBI:58349"/>
    </ligand>
</feature>
<feature type="binding site" evidence="2 6 7 8">
    <location>
        <position position="315"/>
    </location>
    <ligand>
        <name>FAD</name>
        <dbReference type="ChEBI" id="CHEBI:57692"/>
    </ligand>
</feature>
<feature type="binding site" evidence="2 6 7 8">
    <location>
        <position position="318"/>
    </location>
    <ligand>
        <name>FAD</name>
        <dbReference type="ChEBI" id="CHEBI:57692"/>
    </ligand>
</feature>
<feature type="binding site" evidence="2 6 7 8">
    <location>
        <position position="409"/>
    </location>
    <ligand>
        <name>NADP(+)</name>
        <dbReference type="ChEBI" id="CHEBI:58349"/>
    </ligand>
</feature>
<feature type="mutagenesis site" description="Retains 15% of wild-type activity with DMS as substrate." evidence="2">
    <original>E</original>
    <variation>A</variation>
    <location>
        <position position="37"/>
    </location>
</feature>
<feature type="mutagenesis site" description="Retains 10% of wild-type activity with DMS as substrate." evidence="2">
    <original>W</original>
    <variation>A</variation>
    <location>
        <position position="46"/>
    </location>
</feature>
<feature type="mutagenesis site" description="Loss of activity." evidence="2">
    <original>W</original>
    <variation>A</variation>
    <location>
        <position position="70"/>
    </location>
</feature>
<feature type="mutagenesis site" description="Retains 40% of wild-type activity with DMS as substrate." evidence="2">
    <original>N</original>
    <variation>A</variation>
    <location>
        <position position="72"/>
    </location>
</feature>
<feature type="mutagenesis site" description="Retains 5% of wild-type activity with DMS as substrate." evidence="2">
    <original>Y</original>
    <variation>A</variation>
    <location>
        <position position="170"/>
    </location>
</feature>
<feature type="mutagenesis site" description="Retains 10% of wild-type activity with DMS as substrate." evidence="2">
    <original>Y</original>
    <variation>F</variation>
    <location>
        <position position="170"/>
    </location>
</feature>
<feature type="mutagenesis site" description="Retains 20% of wild-type activity with DMS as substrate." evidence="2">
    <original>S</original>
    <variation>A</variation>
    <location>
        <position position="203"/>
    </location>
</feature>
<feature type="mutagenesis site" description="Retains 20% of wild-type activity with DMS as substrate." evidence="2">
    <original>R</original>
    <variation>A</variation>
    <location>
        <position position="226"/>
    </location>
</feature>
<feature type="mutagenesis site" description="Retains 60% of wild-type activity with DMS as substrate." evidence="2">
    <original>H</original>
    <variation>A</variation>
    <location>
        <position position="227"/>
    </location>
</feature>
<feature type="mutagenesis site" description="Retains 30% of wild-type activity with DMS as substrate." evidence="2">
    <original>N</original>
    <variation>A</variation>
    <location>
        <position position="288"/>
    </location>
</feature>
<feature type="mutagenesis site" description="Retains 45% of wild-type activity with DMS as substrate." evidence="2">
    <original>D</original>
    <variation>A</variation>
    <location>
        <position position="314"/>
    </location>
</feature>
<feature type="mutagenesis site" description="Increases wild-type activity with DMS as substrate." evidence="2">
    <original>D</original>
    <variation>E</variation>
    <location>
        <position position="314"/>
    </location>
</feature>
<feature type="mutagenesis site" description="Retains 5% of wild-type activity with DMS as substrate." evidence="2">
    <original>Q</original>
    <variation>A</variation>
    <location>
        <position position="315"/>
    </location>
</feature>
<feature type="mutagenesis site" description="Retains 5% of wild-type activity with DMS as substrate." evidence="2">
    <original>T</original>
    <variation>A</variation>
    <location>
        <position position="318"/>
    </location>
</feature>
<feature type="mutagenesis site" description="Retains 60% of wild-type activity with DMS as substrate." evidence="2">
    <original>R</original>
    <variation>A</variation>
    <location>
        <position position="409"/>
    </location>
</feature>
<feature type="strand" evidence="9">
    <location>
        <begin position="3"/>
        <end position="7"/>
    </location>
</feature>
<feature type="helix" evidence="9">
    <location>
        <begin position="11"/>
        <end position="26"/>
    </location>
</feature>
<feature type="strand" evidence="9">
    <location>
        <begin position="32"/>
        <end position="36"/>
    </location>
</feature>
<feature type="strand" evidence="9">
    <location>
        <begin position="38"/>
        <end position="42"/>
    </location>
</feature>
<feature type="helix" evidence="9">
    <location>
        <begin position="44"/>
        <end position="46"/>
    </location>
</feature>
<feature type="helix" evidence="9">
    <location>
        <begin position="75"/>
        <end position="78"/>
    </location>
</feature>
<feature type="helix" evidence="9">
    <location>
        <begin position="85"/>
        <end position="89"/>
    </location>
</feature>
<feature type="helix" evidence="9">
    <location>
        <begin position="99"/>
        <end position="110"/>
    </location>
</feature>
<feature type="strand" evidence="9">
    <location>
        <begin position="111"/>
        <end position="115"/>
    </location>
</feature>
<feature type="helix" evidence="9">
    <location>
        <begin position="116"/>
        <end position="118"/>
    </location>
</feature>
<feature type="strand" evidence="9">
    <location>
        <begin position="122"/>
        <end position="131"/>
    </location>
</feature>
<feature type="strand" evidence="9">
    <location>
        <begin position="134"/>
        <end position="141"/>
    </location>
</feature>
<feature type="turn" evidence="9">
    <location>
        <begin position="142"/>
        <end position="145"/>
    </location>
</feature>
<feature type="strand" evidence="9">
    <location>
        <begin position="146"/>
        <end position="157"/>
    </location>
</feature>
<feature type="strand" evidence="9">
    <location>
        <begin position="161"/>
        <end position="165"/>
    </location>
</feature>
<feature type="helix" evidence="9">
    <location>
        <begin position="173"/>
        <end position="175"/>
    </location>
</feature>
<feature type="strand" evidence="9">
    <location>
        <begin position="178"/>
        <end position="182"/>
    </location>
</feature>
<feature type="helix" evidence="9">
    <location>
        <begin position="183"/>
        <end position="185"/>
    </location>
</feature>
<feature type="helix" evidence="9">
    <location>
        <begin position="189"/>
        <end position="192"/>
    </location>
</feature>
<feature type="strand" evidence="9">
    <location>
        <begin position="196"/>
        <end position="200"/>
    </location>
</feature>
<feature type="helix" evidence="9">
    <location>
        <begin position="204"/>
        <end position="215"/>
    </location>
</feature>
<feature type="strand" evidence="9">
    <location>
        <begin position="219"/>
        <end position="227"/>
    </location>
</feature>
<feature type="strand" evidence="9">
    <location>
        <begin position="238"/>
        <end position="242"/>
    </location>
</feature>
<feature type="strand" evidence="9">
    <location>
        <begin position="244"/>
        <end position="248"/>
    </location>
</feature>
<feature type="strand" evidence="9">
    <location>
        <begin position="251"/>
        <end position="254"/>
    </location>
</feature>
<feature type="strand" evidence="9">
    <location>
        <begin position="259"/>
        <end position="261"/>
    </location>
</feature>
<feature type="strand" evidence="9">
    <location>
        <begin position="263"/>
        <end position="267"/>
    </location>
</feature>
<feature type="helix" evidence="9">
    <location>
        <begin position="280"/>
        <end position="282"/>
    </location>
</feature>
<feature type="strand" evidence="9">
    <location>
        <begin position="293"/>
        <end position="296"/>
    </location>
</feature>
<feature type="turn" evidence="9">
    <location>
        <begin position="297"/>
        <end position="299"/>
    </location>
</feature>
<feature type="strand" evidence="9">
    <location>
        <begin position="307"/>
        <end position="309"/>
    </location>
</feature>
<feature type="helix" evidence="9">
    <location>
        <begin position="319"/>
        <end position="333"/>
    </location>
</feature>
<feature type="helix" evidence="9">
    <location>
        <begin position="342"/>
        <end position="357"/>
    </location>
</feature>
<feature type="helix" evidence="9">
    <location>
        <begin position="362"/>
        <end position="379"/>
    </location>
</feature>
<feature type="helix" evidence="9">
    <location>
        <begin position="387"/>
        <end position="403"/>
    </location>
</feature>
<feature type="turn" evidence="9">
    <location>
        <begin position="405"/>
        <end position="407"/>
    </location>
</feature>
<feature type="helix" evidence="9">
    <location>
        <begin position="408"/>
        <end position="410"/>
    </location>
</feature>
<feature type="turn" evidence="9">
    <location>
        <begin position="416"/>
        <end position="418"/>
    </location>
</feature>
<feature type="helix" evidence="9">
    <location>
        <begin position="429"/>
        <end position="431"/>
    </location>
</feature>
<feature type="helix" evidence="9">
    <location>
        <begin position="437"/>
        <end position="441"/>
    </location>
</feature>
<protein>
    <recommendedName>
        <fullName evidence="3">Trimethylamine monooxygenase</fullName>
        <shortName evidence="3">TMA monooxygenase</shortName>
        <shortName evidence="3">Tmm</shortName>
        <ecNumber evidence="1 2">1.14.13.148</ecNumber>
    </recommendedName>
</protein>
<sequence>MSKVAIIGAGPCGLSILRAFEHLEKKGEKIPEIVCFEKQESWGGLWNYNWRTGSDQYGDPVPNSMYRYLWSNGPKECLEFADYSFDQHFGKSIPSFPPREVLQDYILGRVSKGNIKNKIKFNTRVINTVYRNDKFEINYQDKVNDKTLSDTFDYLVVSTGHFSVPFIPEYEGMSSFPGRIMHSHDFRDAEEFRGKNVIVLGSSYSAEDVALQCNKYGAKSVTIGYRHNPMGFKWPKGMKEVHYLDKLDGKKAIFKDGTEQDADVVILCTGYLHHFPFLDESLKLKTHNRLYPPKLYKGVVWQDNHKLLYLGMQDQFHTFNMFDCQAWFARDVIMDKIKMPSDDEIDKDINKWVSMEEKLENPDQMIDFQTEYTKELHNISDYPKIDFELIRKHFKEWEHHKVEDILTYRNKSFSSPVTGSVAPVHHTPWEKAMDDSMKTFLNKR</sequence>
<dbReference type="EC" id="1.14.13.148" evidence="1 2"/>
<dbReference type="EMBL" id="DS995298">
    <property type="protein sequence ID" value="EDZ59919.1"/>
    <property type="molecule type" value="Genomic_DNA"/>
</dbReference>
<dbReference type="RefSeq" id="WP_008544347.1">
    <property type="nucleotide sequence ID" value="NZ_DS995298.1"/>
</dbReference>
<dbReference type="PDB" id="7D4K">
    <property type="method" value="X-ray"/>
    <property type="resolution" value="1.80 A"/>
    <property type="chains" value="A/B=1-444"/>
</dbReference>
<dbReference type="PDB" id="7D4M">
    <property type="method" value="X-ray"/>
    <property type="resolution" value="1.79 A"/>
    <property type="chains" value="A/B=1-444"/>
</dbReference>
<dbReference type="PDB" id="7D4N">
    <property type="method" value="X-ray"/>
    <property type="resolution" value="2.00 A"/>
    <property type="chains" value="A/B=1-444"/>
</dbReference>
<dbReference type="PDBsum" id="7D4K"/>
<dbReference type="PDBsum" id="7D4M"/>
<dbReference type="PDBsum" id="7D4N"/>
<dbReference type="SMR" id="B6BQB2"/>
<dbReference type="STRING" id="439493.PB7211_242"/>
<dbReference type="eggNOG" id="COG2072">
    <property type="taxonomic scope" value="Bacteria"/>
</dbReference>
<dbReference type="HOGENOM" id="CLU_006909_3_0_5"/>
<dbReference type="OrthoDB" id="9790219at2"/>
<dbReference type="Proteomes" id="UP000004675">
    <property type="component" value="Unassembled WGS sequence"/>
</dbReference>
<dbReference type="GO" id="GO:0050660">
    <property type="term" value="F:flavin adenine dinucleotide binding"/>
    <property type="evidence" value="ECO:0007669"/>
    <property type="project" value="InterPro"/>
</dbReference>
<dbReference type="GO" id="GO:0004499">
    <property type="term" value="F:N,N-dimethylaniline monooxygenase activity"/>
    <property type="evidence" value="ECO:0007669"/>
    <property type="project" value="InterPro"/>
</dbReference>
<dbReference type="GO" id="GO:0050661">
    <property type="term" value="F:NADP binding"/>
    <property type="evidence" value="ECO:0007669"/>
    <property type="project" value="InterPro"/>
</dbReference>
<dbReference type="FunFam" id="3.50.50.60:FF:000138">
    <property type="entry name" value="Flavin-containing monooxygenase"/>
    <property type="match status" value="1"/>
</dbReference>
<dbReference type="Gene3D" id="3.50.50.60">
    <property type="entry name" value="FAD/NAD(P)-binding domain"/>
    <property type="match status" value="2"/>
</dbReference>
<dbReference type="InterPro" id="IPR036188">
    <property type="entry name" value="FAD/NAD-bd_sf"/>
</dbReference>
<dbReference type="InterPro" id="IPR000960">
    <property type="entry name" value="Flavin_mOase"/>
</dbReference>
<dbReference type="InterPro" id="IPR020946">
    <property type="entry name" value="Flavin_mOase-like"/>
</dbReference>
<dbReference type="InterPro" id="IPR050346">
    <property type="entry name" value="FMO-like"/>
</dbReference>
<dbReference type="PANTHER" id="PTHR23023">
    <property type="entry name" value="DIMETHYLANILINE MONOOXYGENASE"/>
    <property type="match status" value="1"/>
</dbReference>
<dbReference type="Pfam" id="PF00743">
    <property type="entry name" value="FMO-like"/>
    <property type="match status" value="2"/>
</dbReference>
<dbReference type="PIRSF" id="PIRSF000332">
    <property type="entry name" value="FMO"/>
    <property type="match status" value="1"/>
</dbReference>
<dbReference type="SUPFAM" id="SSF51905">
    <property type="entry name" value="FAD/NAD(P)-binding domain"/>
    <property type="match status" value="2"/>
</dbReference>
<evidence type="ECO:0000269" key="1">
    <source>
    </source>
</evidence>
<evidence type="ECO:0000269" key="2">
    <source>
    </source>
</evidence>
<evidence type="ECO:0000303" key="3">
    <source>
    </source>
</evidence>
<evidence type="ECO:0000305" key="4"/>
<evidence type="ECO:0000312" key="5">
    <source>
        <dbReference type="EMBL" id="EDZ59919.1"/>
    </source>
</evidence>
<evidence type="ECO:0007744" key="6">
    <source>
        <dbReference type="PDB" id="7D4K"/>
    </source>
</evidence>
<evidence type="ECO:0007744" key="7">
    <source>
        <dbReference type="PDB" id="7D4M"/>
    </source>
</evidence>
<evidence type="ECO:0007744" key="8">
    <source>
        <dbReference type="PDB" id="7D4N"/>
    </source>
</evidence>
<evidence type="ECO:0007829" key="9">
    <source>
        <dbReference type="PDB" id="7D4M"/>
    </source>
</evidence>
<accession>B6BQB2</accession>